<name>BGLR_HUMAN</name>
<protein>
    <recommendedName>
        <fullName>Beta-glucuronidase</fullName>
        <ecNumber evidence="23">3.2.1.31</ecNumber>
    </recommendedName>
    <alternativeName>
        <fullName>Beta-G1</fullName>
    </alternativeName>
</protein>
<evidence type="ECO:0000269" key="1">
    <source>
    </source>
</evidence>
<evidence type="ECO:0000269" key="2">
    <source>
    </source>
</evidence>
<evidence type="ECO:0000269" key="3">
    <source>
    </source>
</evidence>
<evidence type="ECO:0000269" key="4">
    <source>
    </source>
</evidence>
<evidence type="ECO:0000269" key="5">
    <source>
    </source>
</evidence>
<evidence type="ECO:0000269" key="6">
    <source>
    </source>
</evidence>
<evidence type="ECO:0000269" key="7">
    <source>
    </source>
</evidence>
<evidence type="ECO:0000269" key="8">
    <source>
    </source>
</evidence>
<evidence type="ECO:0000269" key="9">
    <source>
    </source>
</evidence>
<evidence type="ECO:0000269" key="10">
    <source>
    </source>
</evidence>
<evidence type="ECO:0000269" key="11">
    <source>
    </source>
</evidence>
<evidence type="ECO:0000269" key="12">
    <source>
    </source>
</evidence>
<evidence type="ECO:0000269" key="13">
    <source>
    </source>
</evidence>
<evidence type="ECO:0000269" key="14">
    <source>
    </source>
</evidence>
<evidence type="ECO:0000269" key="15">
    <source>
    </source>
</evidence>
<evidence type="ECO:0000269" key="16">
    <source>
    </source>
</evidence>
<evidence type="ECO:0000269" key="17">
    <source>
    </source>
</evidence>
<evidence type="ECO:0000269" key="18">
    <source>
    </source>
</evidence>
<evidence type="ECO:0000269" key="19">
    <source>
    </source>
</evidence>
<evidence type="ECO:0000269" key="20">
    <source>
    </source>
</evidence>
<evidence type="ECO:0000303" key="21">
    <source>
    </source>
</evidence>
<evidence type="ECO:0000305" key="22"/>
<evidence type="ECO:0000305" key="23">
    <source>
    </source>
</evidence>
<evidence type="ECO:0007829" key="24">
    <source>
        <dbReference type="PDB" id="1BHG"/>
    </source>
</evidence>
<evidence type="ECO:0007829" key="25">
    <source>
        <dbReference type="PDB" id="3HN3"/>
    </source>
</evidence>
<keyword id="KW-0002">3D-structure</keyword>
<keyword id="KW-0025">Alternative splicing</keyword>
<keyword id="KW-0903">Direct protein sequencing</keyword>
<keyword id="KW-0225">Disease variant</keyword>
<keyword id="KW-0325">Glycoprotein</keyword>
<keyword id="KW-0326">Glycosidase</keyword>
<keyword id="KW-0378">Hydrolase</keyword>
<keyword id="KW-0458">Lysosome</keyword>
<keyword id="KW-0510">Mucopolysaccharidosis</keyword>
<keyword id="KW-1267">Proteomics identification</keyword>
<keyword id="KW-1185">Reference proteome</keyword>
<keyword id="KW-0732">Signal</keyword>
<feature type="signal peptide" evidence="4">
    <location>
        <begin position="1"/>
        <end position="22"/>
    </location>
</feature>
<feature type="chain" id="PRO_0000012161" description="Beta-glucuronidase">
    <location>
        <begin position="23"/>
        <end position="651"/>
    </location>
</feature>
<feature type="active site" description="Proton donor">
    <location>
        <position position="451"/>
    </location>
</feature>
<feature type="glycosylation site" description="N-linked (GlcNAc...) asparagine" evidence="8">
    <location>
        <position position="173"/>
    </location>
</feature>
<feature type="glycosylation site" description="N-linked (GlcNAc...) asparagine" evidence="2 6 8">
    <location>
        <position position="272"/>
    </location>
</feature>
<feature type="glycosylation site" description="N-linked (GlcNAc...) asparagine">
    <location>
        <position position="420"/>
    </location>
</feature>
<feature type="glycosylation site" description="N-linked (GlcNAc...) asparagine" evidence="8">
    <location>
        <position position="631"/>
    </location>
</feature>
<feature type="splice variant" id="VSP_054830" description="In isoform 3." evidence="21">
    <location>
        <begin position="159"/>
        <end position="304"/>
    </location>
</feature>
<feature type="splice variant" id="VSP_001799" description="In isoform 2." evidence="22">
    <location>
        <begin position="305"/>
        <end position="355"/>
    </location>
</feature>
<feature type="sequence variant" id="VAR_058511" description="In MPS7; dbSNP:rs747792546." evidence="9">
    <original>P</original>
    <variation>S</variation>
    <location>
        <position position="30"/>
    </location>
</feature>
<feature type="sequence variant" id="VAR_037914" description="In MPS7; very mild phenotype; dbSNP:rs779499448." evidence="20">
    <original>C</original>
    <variation>G</variation>
    <location>
        <position position="38"/>
    </location>
</feature>
<feature type="sequence variant" id="VAR_037915" description="In MPS7; loss of activity; dbSNP:rs1424546265." evidence="19">
    <original>S</original>
    <variation>F</variation>
    <location>
        <position position="52"/>
    </location>
</feature>
<feature type="sequence variant" id="VAR_037916" description="In MPS7; dbSNP:rs1417426295." evidence="17">
    <original>G</original>
    <variation>R</variation>
    <location>
        <position position="136"/>
    </location>
</feature>
<feature type="sequence variant" id="VAR_037917" description="In MPS7; dbSNP:rs121918177." evidence="12">
    <original>P</original>
    <variation>S</variation>
    <location>
        <position position="148"/>
    </location>
</feature>
<feature type="sequence variant" id="VAR_037918" description="In MPS7." evidence="17">
    <original>E</original>
    <variation>K</variation>
    <location>
        <position position="150"/>
    </location>
</feature>
<feature type="sequence variant" id="VAR_058512" description="In MPS7." evidence="9">
    <original>D</original>
    <variation>G</variation>
    <location>
        <position position="152"/>
    </location>
</feature>
<feature type="sequence variant" id="VAR_037919" description="Found in beta-glucuronidase pseudodeficiency with no clinical consequences; likely benign; reduced activity levels; dbSNP:rs149606212." evidence="11 20">
    <original>D</original>
    <variation>N</variation>
    <location>
        <position position="152"/>
    </location>
</feature>
<feature type="sequence variant" id="VAR_037920" description="In MPS7; dbSNP:rs121918181." evidence="3 11 14 17">
    <original>L</original>
    <variation>F</variation>
    <location>
        <position position="176"/>
    </location>
</feature>
<feature type="sequence variant" id="VAR_003196" description="In MPS7; dbSNP:rs121918174." evidence="15 17">
    <original>R</original>
    <variation>W</variation>
    <location>
        <position position="216"/>
    </location>
</feature>
<feature type="sequence variant" id="VAR_058513" description="In MPS7." evidence="9">
    <original>L</original>
    <variation>P</variation>
    <location>
        <position position="243"/>
    </location>
</feature>
<feature type="sequence variant" id="VAR_037921" description="In MPS7." evidence="17">
    <original>Y</original>
    <variation>C</variation>
    <location>
        <position position="320"/>
    </location>
</feature>
<feature type="sequence variant" id="VAR_037922" description="In MPS7; dbSNP:rs886044680." evidence="17">
    <original>Y</original>
    <variation>S</variation>
    <location>
        <position position="320"/>
    </location>
</feature>
<feature type="sequence variant" id="VAR_058514" description="In MPS7; dbSNP:rs1791469915." evidence="9">
    <original>N</original>
    <variation>S</variation>
    <location>
        <position position="339"/>
    </location>
</feature>
<feature type="sequence variant" id="VAR_037923" description="In MPS7; dbSNP:rs121918182." evidence="1">
    <original>K</original>
    <variation>N</variation>
    <location>
        <position position="350"/>
    </location>
</feature>
<feature type="sequence variant" id="VAR_037924" description="In MPS7; dbSNP:rs191153460." evidence="17">
    <original>H</original>
    <variation>Y</variation>
    <location>
        <position position="351"/>
    </location>
</feature>
<feature type="sequence variant" id="VAR_003197" description="In MPS7; dbSNP:rs121918175." evidence="16">
    <original>A</original>
    <variation>V</variation>
    <location>
        <position position="354"/>
    </location>
</feature>
<feature type="sequence variant" id="VAR_089966" description="In MPS7." evidence="9">
    <location>
        <begin position="361"/>
        <end position="369"/>
    </location>
</feature>
<feature type="sequence variant" id="VAR_058516" description="In MPS7; dbSNP:rs398123234." evidence="9">
    <original>D</original>
    <variation>N</variation>
    <location>
        <position position="362"/>
    </location>
</feature>
<feature type="sequence variant" id="VAR_058517" description="In MPS7; dbSNP:rs771629102." evidence="9">
    <original>P</original>
    <variation>L</variation>
    <location>
        <position position="364"/>
    </location>
</feature>
<feature type="sequence variant" id="VAR_037925" description="In MPS7; dbSNP:rs747572640." evidence="17">
    <original>R</original>
    <variation>C</variation>
    <location>
        <position position="374"/>
    </location>
</feature>
<feature type="sequence variant" id="VAR_055884" description="In dbSNP:rs11559283.">
    <original>L</original>
    <variation>F</variation>
    <location>
        <position position="376"/>
    </location>
</feature>
<feature type="sequence variant" id="VAR_003198" description="In MPS7; dbSNP:rs121918173." evidence="7 17">
    <original>R</original>
    <variation>C</variation>
    <location>
        <position position="382"/>
    </location>
</feature>
<feature type="sequence variant" id="VAR_037926" description="In MPS7; dbSNP:rs764018631." evidence="17">
    <original>R</original>
    <variation>H</variation>
    <location>
        <position position="382"/>
    </location>
</feature>
<feature type="sequence variant" id="VAR_037927" description="In MPS7; dbSNP:rs779091113." evidence="18">
    <original>P</original>
    <variation>S</variation>
    <location>
        <position position="408"/>
    </location>
</feature>
<feature type="sequence variant" id="VAR_037928" description="In MPS7; dbSNP:rs751025746." evidence="18">
    <original>P</original>
    <variation>L</variation>
    <location>
        <position position="415"/>
    </location>
</feature>
<feature type="sequence variant" id="VAR_037929" description="In MPS7." evidence="17">
    <original>R</original>
    <variation>P</variation>
    <location>
        <position position="435"/>
    </location>
</feature>
<feature type="sequence variant" id="VAR_037930" description="In MPS7; dbSNP:rs774393243." evidence="17">
    <original>R</original>
    <variation>W</variation>
    <location>
        <position position="477"/>
    </location>
</feature>
<feature type="sequence variant" id="VAR_037931" description="In MPS7; dbSNP:rs121918178." evidence="12">
    <original>Y</original>
    <variation>C</variation>
    <location>
        <position position="495"/>
    </location>
</feature>
<feature type="sequence variant" id="VAR_037932" description="In MPS7; dbSNP:rs1790938669." evidence="17">
    <original>Y</original>
    <variation>C</variation>
    <location>
        <position position="508"/>
    </location>
</feature>
<feature type="sequence variant" id="VAR_058518" description="In MPS7." evidence="9">
    <original>E</original>
    <variation>K</variation>
    <location>
        <position position="540"/>
    </location>
</feature>
<feature type="sequence variant" id="VAR_037933" description="In MPS7." evidence="17">
    <original>G</original>
    <variation>D</variation>
    <location>
        <position position="572"/>
    </location>
</feature>
<feature type="sequence variant" id="VAR_037934" description="In MPS7; loss of activity; dbSNP:rs121918183." evidence="1">
    <original>R</original>
    <variation>L</variation>
    <location>
        <position position="577"/>
    </location>
</feature>
<feature type="sequence variant" id="VAR_037935" description="In MPS7." evidence="17">
    <original>K</original>
    <variation>N</variation>
    <location>
        <position position="606"/>
    </location>
</feature>
<feature type="sequence variant" id="VAR_058519" description="In MPS7; dbSNP:rs1250112198." evidence="9">
    <original>G</original>
    <variation>A</variation>
    <location>
        <position position="607"/>
    </location>
</feature>
<feature type="sequence variant" id="VAR_003199" description="In MPS7; dbSNP:rs121918176." evidence="16">
    <original>R</original>
    <variation>W</variation>
    <location>
        <position position="611"/>
    </location>
</feature>
<feature type="sequence variant" id="VAR_003200" description="In MPS7; dbSNP:rs121918172." evidence="7">
    <original>A</original>
    <variation>V</variation>
    <location>
        <position position="619"/>
    </location>
</feature>
<feature type="sequence variant" id="VAR_037936" description="In MPS7; very mild phenotype; dbSNP:rs777613366." evidence="20">
    <original>Y</original>
    <variation>H</variation>
    <location>
        <position position="626"/>
    </location>
</feature>
<feature type="sequence variant" id="VAR_003201" description="In MPS7; dbSNP:rs121918184." evidence="13 17">
    <original>W</original>
    <variation>C</variation>
    <location>
        <position position="627"/>
    </location>
</feature>
<feature type="sequence variant" id="VAR_016179" description="In dbSNP:rs9530." evidence="5 10 14">
    <original>L</original>
    <variation>P</variation>
    <location>
        <position position="649"/>
    </location>
</feature>
<feature type="strand" evidence="24">
    <location>
        <begin position="33"/>
        <end position="35"/>
    </location>
</feature>
<feature type="strand" evidence="25">
    <location>
        <begin position="38"/>
        <end position="40"/>
    </location>
</feature>
<feature type="strand" evidence="25">
    <location>
        <begin position="43"/>
        <end position="49"/>
    </location>
</feature>
<feature type="strand" evidence="24">
    <location>
        <begin position="52"/>
        <end position="55"/>
    </location>
</feature>
<feature type="helix" evidence="25">
    <location>
        <begin position="57"/>
        <end position="60"/>
    </location>
</feature>
<feature type="helix" evidence="25">
    <location>
        <begin position="63"/>
        <end position="65"/>
    </location>
</feature>
<feature type="helix" evidence="25">
    <location>
        <begin position="68"/>
        <end position="71"/>
    </location>
</feature>
<feature type="strand" evidence="25">
    <location>
        <begin position="75"/>
        <end position="81"/>
    </location>
</feature>
<feature type="turn" evidence="25">
    <location>
        <begin position="84"/>
        <end position="86"/>
    </location>
</feature>
<feature type="helix" evidence="25">
    <location>
        <begin position="90"/>
        <end position="93"/>
    </location>
</feature>
<feature type="strand" evidence="25">
    <location>
        <begin position="97"/>
        <end position="105"/>
    </location>
</feature>
<feature type="helix" evidence="25">
    <location>
        <begin position="109"/>
        <end position="113"/>
    </location>
</feature>
<feature type="strand" evidence="25">
    <location>
        <begin position="117"/>
        <end position="124"/>
    </location>
</feature>
<feature type="strand" evidence="25">
    <location>
        <begin position="128"/>
        <end position="134"/>
    </location>
</feature>
<feature type="strand" evidence="25">
    <location>
        <begin position="137"/>
        <end position="147"/>
    </location>
</feature>
<feature type="strand" evidence="25">
    <location>
        <begin position="149"/>
        <end position="152"/>
    </location>
</feature>
<feature type="helix" evidence="25">
    <location>
        <begin position="154"/>
        <end position="157"/>
    </location>
</feature>
<feature type="strand" evidence="25">
    <location>
        <begin position="166"/>
        <end position="173"/>
    </location>
</feature>
<feature type="strand" evidence="25">
    <location>
        <begin position="180"/>
        <end position="182"/>
    </location>
</feature>
<feature type="strand" evidence="25">
    <location>
        <begin position="185"/>
        <end position="188"/>
    </location>
</feature>
<feature type="turn" evidence="25">
    <location>
        <begin position="192"/>
        <end position="194"/>
    </location>
</feature>
<feature type="strand" evidence="25">
    <location>
        <begin position="200"/>
        <end position="203"/>
    </location>
</feature>
<feature type="strand" evidence="25">
    <location>
        <begin position="206"/>
        <end position="208"/>
    </location>
</feature>
<feature type="strand" evidence="25">
    <location>
        <begin position="218"/>
        <end position="238"/>
    </location>
</feature>
<feature type="strand" evidence="25">
    <location>
        <begin position="241"/>
        <end position="252"/>
    </location>
</feature>
<feature type="strand" evidence="25">
    <location>
        <begin position="256"/>
        <end position="263"/>
    </location>
</feature>
<feature type="strand" evidence="24">
    <location>
        <begin position="265"/>
        <end position="267"/>
    </location>
</feature>
<feature type="strand" evidence="25">
    <location>
        <begin position="269"/>
        <end position="282"/>
    </location>
</feature>
<feature type="turn" evidence="24">
    <location>
        <begin position="291"/>
        <end position="293"/>
    </location>
</feature>
<feature type="strand" evidence="25">
    <location>
        <begin position="294"/>
        <end position="296"/>
    </location>
</feature>
<feature type="strand" evidence="25">
    <location>
        <begin position="301"/>
        <end position="311"/>
    </location>
</feature>
<feature type="strand" evidence="25">
    <location>
        <begin position="314"/>
        <end position="324"/>
    </location>
</feature>
<feature type="strand" evidence="25">
    <location>
        <begin position="329"/>
        <end position="331"/>
    </location>
</feature>
<feature type="strand" evidence="25">
    <location>
        <begin position="336"/>
        <end position="338"/>
    </location>
</feature>
<feature type="strand" evidence="25">
    <location>
        <begin position="341"/>
        <end position="343"/>
    </location>
</feature>
<feature type="strand" evidence="25">
    <location>
        <begin position="345"/>
        <end position="349"/>
    </location>
</feature>
<feature type="turn" evidence="25">
    <location>
        <begin position="355"/>
        <end position="357"/>
    </location>
</feature>
<feature type="helix" evidence="25">
    <location>
        <begin position="363"/>
        <end position="376"/>
    </location>
</feature>
<feature type="strand" evidence="25">
    <location>
        <begin position="380"/>
        <end position="382"/>
    </location>
</feature>
<feature type="helix" evidence="25">
    <location>
        <begin position="390"/>
        <end position="399"/>
    </location>
</feature>
<feature type="strand" evidence="25">
    <location>
        <begin position="402"/>
        <end position="406"/>
    </location>
</feature>
<feature type="helix" evidence="25">
    <location>
        <begin position="415"/>
        <end position="417"/>
    </location>
</feature>
<feature type="helix" evidence="25">
    <location>
        <begin position="420"/>
        <end position="437"/>
    </location>
</feature>
<feature type="strand" evidence="25">
    <location>
        <begin position="443"/>
        <end position="451"/>
    </location>
</feature>
<feature type="helix" evidence="25">
    <location>
        <begin position="457"/>
        <end position="473"/>
    </location>
</feature>
<feature type="strand" evidence="25">
    <location>
        <begin position="479"/>
        <end position="483"/>
    </location>
</feature>
<feature type="turn" evidence="25">
    <location>
        <begin position="487"/>
        <end position="489"/>
    </location>
</feature>
<feature type="helix" evidence="25">
    <location>
        <begin position="493"/>
        <end position="495"/>
    </location>
</feature>
<feature type="strand" evidence="25">
    <location>
        <begin position="497"/>
        <end position="502"/>
    </location>
</feature>
<feature type="turn" evidence="25">
    <location>
        <begin position="505"/>
        <end position="507"/>
    </location>
</feature>
<feature type="strand" evidence="25">
    <location>
        <begin position="508"/>
        <end position="510"/>
    </location>
</feature>
<feature type="helix" evidence="25">
    <location>
        <begin position="514"/>
        <end position="516"/>
    </location>
</feature>
<feature type="helix" evidence="25">
    <location>
        <begin position="517"/>
        <end position="532"/>
    </location>
</feature>
<feature type="strand" evidence="25">
    <location>
        <begin position="536"/>
        <end position="540"/>
    </location>
</feature>
<feature type="helix" evidence="25">
    <location>
        <begin position="559"/>
        <end position="574"/>
    </location>
</feature>
<feature type="turn" evidence="25">
    <location>
        <begin position="575"/>
        <end position="580"/>
    </location>
</feature>
<feature type="strand" evidence="25">
    <location>
        <begin position="581"/>
        <end position="587"/>
    </location>
</feature>
<feature type="strand" evidence="25">
    <location>
        <begin position="600"/>
        <end position="604"/>
    </location>
</feature>
<feature type="helix" evidence="25">
    <location>
        <begin position="617"/>
        <end position="631"/>
    </location>
</feature>
<comment type="function">
    <text>Plays an important role in the degradation of dermatan and keratan sulfates.</text>
</comment>
<comment type="catalytic activity">
    <reaction evidence="23">
        <text>a beta-D-glucuronoside + H2O = D-glucuronate + an alcohol</text>
        <dbReference type="Rhea" id="RHEA:17633"/>
        <dbReference type="ChEBI" id="CHEBI:15377"/>
        <dbReference type="ChEBI" id="CHEBI:30879"/>
        <dbReference type="ChEBI" id="CHEBI:58720"/>
        <dbReference type="ChEBI" id="CHEBI:83411"/>
        <dbReference type="EC" id="3.2.1.31"/>
    </reaction>
    <physiologicalReaction direction="left-to-right" evidence="23">
        <dbReference type="Rhea" id="RHEA:17634"/>
    </physiologicalReaction>
</comment>
<comment type="activity regulation">
    <text>Inhibited by L-aspartic acid.</text>
</comment>
<comment type="subunit">
    <text>Homotetramer.</text>
</comment>
<comment type="subcellular location">
    <subcellularLocation>
        <location>Lysosome</location>
    </subcellularLocation>
</comment>
<comment type="alternative products">
    <event type="alternative splicing"/>
    <isoform>
        <id>P08236-1</id>
        <name>1</name>
        <name>Long</name>
        <sequence type="displayed"/>
    </isoform>
    <isoform>
        <id>P08236-2</id>
        <name>2</name>
        <name>Short</name>
        <sequence type="described" ref="VSP_001799"/>
    </isoform>
    <isoform>
        <id>P08236-3</id>
        <name>3</name>
        <sequence type="described" ref="VSP_054830"/>
    </isoform>
</comment>
<comment type="PTM">
    <text evidence="2 6 8">N-linked glycosylated with 3 to 4 oligosaccharide chains.</text>
</comment>
<comment type="disease" evidence="1 3 7 9 11 12 13 14 15 16 17 18 19 20">
    <disease id="DI-00781">
        <name>Mucopolysaccharidosis 7</name>
        <acronym>MPS7</acronym>
        <description>A form of mucopolysaccharidosis, a group of lysosomal storage diseases characterized by defective degradation of glycosaminoglycans, resulting in their excessive accumulation and secretion. The diseases are progressive and often display a wide spectrum of clinical severity. MPS7 is an autosomal recessive form with a highly variable phenotype, ranging from severe lethal hydrops fetalis to mild forms with survival into adulthood. Most patients with the intermediate phenotype show hepatomegaly, skeletal anomalies, coarse facies, and variable degrees of mental impairment.</description>
        <dbReference type="MIM" id="253220"/>
    </disease>
    <text>The disease is caused by variants affecting the gene represented in this entry.</text>
</comment>
<comment type="similarity">
    <text evidence="22">Belongs to the glycosyl hydrolase 2 family.</text>
</comment>
<organism>
    <name type="scientific">Homo sapiens</name>
    <name type="common">Human</name>
    <dbReference type="NCBI Taxonomy" id="9606"/>
    <lineage>
        <taxon>Eukaryota</taxon>
        <taxon>Metazoa</taxon>
        <taxon>Chordata</taxon>
        <taxon>Craniata</taxon>
        <taxon>Vertebrata</taxon>
        <taxon>Euteleostomi</taxon>
        <taxon>Mammalia</taxon>
        <taxon>Eutheria</taxon>
        <taxon>Euarchontoglires</taxon>
        <taxon>Primates</taxon>
        <taxon>Haplorrhini</taxon>
        <taxon>Catarrhini</taxon>
        <taxon>Hominidae</taxon>
        <taxon>Homo</taxon>
    </lineage>
</organism>
<dbReference type="EC" id="3.2.1.31" evidence="23"/>
<dbReference type="EMBL" id="M15182">
    <property type="protein sequence ID" value="AAA52561.1"/>
    <property type="molecule type" value="mRNA"/>
</dbReference>
<dbReference type="EMBL" id="AK303819">
    <property type="protein sequence ID" value="BAG64768.1"/>
    <property type="molecule type" value="mRNA"/>
</dbReference>
<dbReference type="EMBL" id="AK223406">
    <property type="protein sequence ID" value="BAD97126.1"/>
    <property type="molecule type" value="mRNA"/>
</dbReference>
<dbReference type="EMBL" id="AC073261">
    <property type="protein sequence ID" value="AAQ96851.1"/>
    <property type="molecule type" value="Genomic_DNA"/>
</dbReference>
<dbReference type="EMBL" id="CH236961">
    <property type="protein sequence ID" value="EAL23740.1"/>
    <property type="molecule type" value="Genomic_DNA"/>
</dbReference>
<dbReference type="EMBL" id="CH471140">
    <property type="protein sequence ID" value="EAX07951.1"/>
    <property type="molecule type" value="Genomic_DNA"/>
</dbReference>
<dbReference type="EMBL" id="BC014142">
    <property type="protein sequence ID" value="AAH14142.1"/>
    <property type="molecule type" value="mRNA"/>
</dbReference>
<dbReference type="EMBL" id="M65002">
    <property type="protein sequence ID" value="AAA52622.1"/>
    <property type="molecule type" value="Genomic_DNA"/>
</dbReference>
<dbReference type="EMBL" id="M10618">
    <property type="protein sequence ID" value="AAA52621.1"/>
    <property type="molecule type" value="mRNA"/>
</dbReference>
<dbReference type="EMBL" id="S72462">
    <property type="protein sequence ID" value="AAD14101.1"/>
    <property type="molecule type" value="Genomic_DNA"/>
</dbReference>
<dbReference type="CCDS" id="CCDS5530.1">
    <molecule id="P08236-1"/>
</dbReference>
<dbReference type="CCDS" id="CCDS64665.1">
    <molecule id="P08236-3"/>
</dbReference>
<dbReference type="PIR" id="A26581">
    <property type="entry name" value="A26581"/>
</dbReference>
<dbReference type="RefSeq" id="NP_000172.2">
    <molecule id="P08236-1"/>
    <property type="nucleotide sequence ID" value="NM_000181.4"/>
</dbReference>
<dbReference type="RefSeq" id="NP_001271219.1">
    <molecule id="P08236-3"/>
    <property type="nucleotide sequence ID" value="NM_001284290.2"/>
</dbReference>
<dbReference type="RefSeq" id="NP_001280033.1">
    <property type="nucleotide sequence ID" value="NM_001293104.1"/>
</dbReference>
<dbReference type="RefSeq" id="NP_001280034.1">
    <property type="nucleotide sequence ID" value="NM_001293105.1"/>
</dbReference>
<dbReference type="RefSeq" id="XP_005250354.1">
    <molecule id="P08236-2"/>
    <property type="nucleotide sequence ID" value="XM_005250297.5"/>
</dbReference>
<dbReference type="PDB" id="1BHG">
    <property type="method" value="X-ray"/>
    <property type="resolution" value="2.53 A"/>
    <property type="chains" value="A/B=21-633"/>
</dbReference>
<dbReference type="PDB" id="3HN3">
    <property type="method" value="X-ray"/>
    <property type="resolution" value="1.70 A"/>
    <property type="chains" value="A/B/D/E=21-633"/>
</dbReference>
<dbReference type="PDBsum" id="1BHG"/>
<dbReference type="PDBsum" id="3HN3"/>
<dbReference type="SMR" id="P08236"/>
<dbReference type="BioGRID" id="109245">
    <property type="interactions" value="98"/>
</dbReference>
<dbReference type="DIP" id="DIP-29724N"/>
<dbReference type="FunCoup" id="P08236">
    <property type="interactions" value="933"/>
</dbReference>
<dbReference type="IntAct" id="P08236">
    <property type="interactions" value="60"/>
</dbReference>
<dbReference type="MINT" id="P08236"/>
<dbReference type="STRING" id="9606.ENSP00000302728"/>
<dbReference type="BindingDB" id="P08236"/>
<dbReference type="ChEMBL" id="CHEMBL2728"/>
<dbReference type="DrugBank" id="DB09301">
    <property type="generic name" value="Chondroitin sulfate"/>
</dbReference>
<dbReference type="DrugBank" id="DB09340">
    <property type="generic name" value="Tyropanoic acid"/>
</dbReference>
<dbReference type="DrugCentral" id="P08236"/>
<dbReference type="CAZy" id="GH2">
    <property type="family name" value="Glycoside Hydrolase Family 2"/>
</dbReference>
<dbReference type="GlyConnect" id="1037">
    <property type="glycosylation" value="11 N-Linked glycans (3 sites)"/>
</dbReference>
<dbReference type="GlyCosmos" id="P08236">
    <property type="glycosylation" value="5 sites, 12 glycans"/>
</dbReference>
<dbReference type="GlyGen" id="P08236">
    <property type="glycosylation" value="7 sites, 34 N-linked glycans (4 sites), 2 N-linked;o-linked glycans (1 site), 1 O-linked glycan (1 site)"/>
</dbReference>
<dbReference type="iPTMnet" id="P08236"/>
<dbReference type="PhosphoSitePlus" id="P08236"/>
<dbReference type="SwissPalm" id="P08236"/>
<dbReference type="BioMuta" id="GUSB"/>
<dbReference type="DMDM" id="146345377"/>
<dbReference type="jPOST" id="P08236"/>
<dbReference type="MassIVE" id="P08236"/>
<dbReference type="PaxDb" id="9606-ENSP00000302728"/>
<dbReference type="PeptideAtlas" id="P08236"/>
<dbReference type="ProteomicsDB" id="19519"/>
<dbReference type="ProteomicsDB" id="52092">
    <molecule id="P08236-1"/>
</dbReference>
<dbReference type="ProteomicsDB" id="52093">
    <molecule id="P08236-2"/>
</dbReference>
<dbReference type="Pumba" id="P08236"/>
<dbReference type="Antibodypedia" id="14064">
    <property type="antibodies" value="408 antibodies from 36 providers"/>
</dbReference>
<dbReference type="DNASU" id="2990"/>
<dbReference type="Ensembl" id="ENST00000304895.9">
    <molecule id="P08236-1"/>
    <property type="protein sequence ID" value="ENSP00000302728.4"/>
    <property type="gene ID" value="ENSG00000169919.17"/>
</dbReference>
<dbReference type="Ensembl" id="ENST00000421103.5">
    <molecule id="P08236-3"/>
    <property type="protein sequence ID" value="ENSP00000391390.1"/>
    <property type="gene ID" value="ENSG00000169919.17"/>
</dbReference>
<dbReference type="GeneID" id="2990"/>
<dbReference type="KEGG" id="hsa:2990"/>
<dbReference type="MANE-Select" id="ENST00000304895.9">
    <property type="protein sequence ID" value="ENSP00000302728.4"/>
    <property type="RefSeq nucleotide sequence ID" value="NM_000181.4"/>
    <property type="RefSeq protein sequence ID" value="NP_000172.2"/>
</dbReference>
<dbReference type="UCSC" id="uc003tun.4">
    <molecule id="P08236-1"/>
    <property type="organism name" value="human"/>
</dbReference>
<dbReference type="AGR" id="HGNC:4696"/>
<dbReference type="CTD" id="2990"/>
<dbReference type="DisGeNET" id="2990"/>
<dbReference type="GeneCards" id="GUSB"/>
<dbReference type="GeneReviews" id="GUSB"/>
<dbReference type="HGNC" id="HGNC:4696">
    <property type="gene designation" value="GUSB"/>
</dbReference>
<dbReference type="HPA" id="ENSG00000169919">
    <property type="expression patterns" value="Low tissue specificity"/>
</dbReference>
<dbReference type="MalaCards" id="GUSB"/>
<dbReference type="MIM" id="253220">
    <property type="type" value="phenotype"/>
</dbReference>
<dbReference type="MIM" id="611499">
    <property type="type" value="gene"/>
</dbReference>
<dbReference type="neXtProt" id="NX_P08236"/>
<dbReference type="OpenTargets" id="ENSG00000169919"/>
<dbReference type="Orphanet" id="584">
    <property type="disease" value="Mucopolysaccharidosis type 7"/>
</dbReference>
<dbReference type="PharmGKB" id="PA29075"/>
<dbReference type="VEuPathDB" id="HostDB:ENSG00000169919"/>
<dbReference type="eggNOG" id="KOG2024">
    <property type="taxonomic scope" value="Eukaryota"/>
</dbReference>
<dbReference type="GeneTree" id="ENSGT00390000001752"/>
<dbReference type="HOGENOM" id="CLU_006501_6_1_1"/>
<dbReference type="InParanoid" id="P08236"/>
<dbReference type="OMA" id="IHDHVGW"/>
<dbReference type="OrthoDB" id="408532at2759"/>
<dbReference type="PAN-GO" id="P08236">
    <property type="GO annotations" value="5 GO annotations based on evolutionary models"/>
</dbReference>
<dbReference type="PhylomeDB" id="P08236"/>
<dbReference type="TreeFam" id="TF300685"/>
<dbReference type="BRENDA" id="3.2.1.31">
    <property type="organism ID" value="2681"/>
</dbReference>
<dbReference type="PathwayCommons" id="P08236"/>
<dbReference type="Reactome" id="R-HSA-2024096">
    <property type="pathway name" value="HS-GAG degradation"/>
</dbReference>
<dbReference type="Reactome" id="R-HSA-2160916">
    <property type="pathway name" value="Hyaluronan uptake and degradation"/>
</dbReference>
<dbReference type="Reactome" id="R-HSA-2206292">
    <property type="pathway name" value="MPS VII - Sly syndrome"/>
</dbReference>
<dbReference type="Reactome" id="R-HSA-6798695">
    <property type="pathway name" value="Neutrophil degranulation"/>
</dbReference>
<dbReference type="SignaLink" id="P08236"/>
<dbReference type="SIGNOR" id="P08236"/>
<dbReference type="BioGRID-ORCS" id="2990">
    <property type="hits" value="14 hits in 1165 CRISPR screens"/>
</dbReference>
<dbReference type="ChiTaRS" id="GUSB">
    <property type="organism name" value="human"/>
</dbReference>
<dbReference type="EvolutionaryTrace" id="P08236"/>
<dbReference type="GeneWiki" id="GUSB"/>
<dbReference type="GenomeRNAi" id="2990"/>
<dbReference type="Pharos" id="P08236">
    <property type="development level" value="Tchem"/>
</dbReference>
<dbReference type="PRO" id="PR:P08236"/>
<dbReference type="Proteomes" id="UP000005640">
    <property type="component" value="Chromosome 7"/>
</dbReference>
<dbReference type="RNAct" id="P08236">
    <property type="molecule type" value="protein"/>
</dbReference>
<dbReference type="Bgee" id="ENSG00000169919">
    <property type="expression patterns" value="Expressed in endometrium epithelium and 208 other cell types or tissues"/>
</dbReference>
<dbReference type="ExpressionAtlas" id="P08236">
    <property type="expression patterns" value="baseline and differential"/>
</dbReference>
<dbReference type="GO" id="GO:0035578">
    <property type="term" value="C:azurophil granule lumen"/>
    <property type="evidence" value="ECO:0000304"/>
    <property type="project" value="Reactome"/>
</dbReference>
<dbReference type="GO" id="GO:0070062">
    <property type="term" value="C:extracellular exosome"/>
    <property type="evidence" value="ECO:0007005"/>
    <property type="project" value="UniProtKB"/>
</dbReference>
<dbReference type="GO" id="GO:0005576">
    <property type="term" value="C:extracellular region"/>
    <property type="evidence" value="ECO:0000304"/>
    <property type="project" value="Reactome"/>
</dbReference>
<dbReference type="GO" id="GO:0005615">
    <property type="term" value="C:extracellular space"/>
    <property type="evidence" value="ECO:0000314"/>
    <property type="project" value="UniProtKB"/>
</dbReference>
<dbReference type="GO" id="GO:1904813">
    <property type="term" value="C:ficolin-1-rich granule lumen"/>
    <property type="evidence" value="ECO:0000304"/>
    <property type="project" value="Reactome"/>
</dbReference>
<dbReference type="GO" id="GO:0043231">
    <property type="term" value="C:intracellular membrane-bounded organelle"/>
    <property type="evidence" value="ECO:0000314"/>
    <property type="project" value="HPA"/>
</dbReference>
<dbReference type="GO" id="GO:0043202">
    <property type="term" value="C:lysosomal lumen"/>
    <property type="evidence" value="ECO:0000304"/>
    <property type="project" value="Reactome"/>
</dbReference>
<dbReference type="GO" id="GO:0016020">
    <property type="term" value="C:membrane"/>
    <property type="evidence" value="ECO:0007005"/>
    <property type="project" value="UniProtKB"/>
</dbReference>
<dbReference type="GO" id="GO:0004566">
    <property type="term" value="F:beta-glucuronidase activity"/>
    <property type="evidence" value="ECO:0000318"/>
    <property type="project" value="GO_Central"/>
</dbReference>
<dbReference type="GO" id="GO:0030246">
    <property type="term" value="F:carbohydrate binding"/>
    <property type="evidence" value="ECO:0000318"/>
    <property type="project" value="GO_Central"/>
</dbReference>
<dbReference type="GO" id="GO:0019904">
    <property type="term" value="F:protein domain specific binding"/>
    <property type="evidence" value="ECO:0000353"/>
    <property type="project" value="AgBase"/>
</dbReference>
<dbReference type="GO" id="GO:0005102">
    <property type="term" value="F:signaling receptor binding"/>
    <property type="evidence" value="ECO:0000353"/>
    <property type="project" value="AgBase"/>
</dbReference>
<dbReference type="GO" id="GO:0005975">
    <property type="term" value="P:carbohydrate metabolic process"/>
    <property type="evidence" value="ECO:0000304"/>
    <property type="project" value="ProtInc"/>
</dbReference>
<dbReference type="GO" id="GO:0030207">
    <property type="term" value="P:chondroitin sulfate proteoglycan catabolic process"/>
    <property type="evidence" value="ECO:0007669"/>
    <property type="project" value="Ensembl"/>
</dbReference>
<dbReference type="GO" id="GO:0006027">
    <property type="term" value="P:glycosaminoglycan catabolic process"/>
    <property type="evidence" value="ECO:0000304"/>
    <property type="project" value="ProtInc"/>
</dbReference>
<dbReference type="GO" id="GO:0030200">
    <property type="term" value="P:heparan sulfate proteoglycan catabolic process"/>
    <property type="evidence" value="ECO:0007669"/>
    <property type="project" value="Ensembl"/>
</dbReference>
<dbReference type="GO" id="GO:0030214">
    <property type="term" value="P:hyaluronan catabolic process"/>
    <property type="evidence" value="ECO:0007669"/>
    <property type="project" value="Ensembl"/>
</dbReference>
<dbReference type="FunFam" id="2.60.120.260:FF:000027">
    <property type="entry name" value="Beta-glucuronidase"/>
    <property type="match status" value="1"/>
</dbReference>
<dbReference type="FunFam" id="2.60.40.10:FF:000628">
    <property type="entry name" value="Beta-glucuronidase"/>
    <property type="match status" value="1"/>
</dbReference>
<dbReference type="FunFam" id="3.20.20.80:FF:000029">
    <property type="entry name" value="Beta-glucuronidase"/>
    <property type="match status" value="1"/>
</dbReference>
<dbReference type="Gene3D" id="2.60.120.260">
    <property type="entry name" value="Galactose-binding domain-like"/>
    <property type="match status" value="1"/>
</dbReference>
<dbReference type="Gene3D" id="3.20.20.80">
    <property type="entry name" value="Glycosidases"/>
    <property type="match status" value="1"/>
</dbReference>
<dbReference type="Gene3D" id="2.60.40.10">
    <property type="entry name" value="Immunoglobulins"/>
    <property type="match status" value="1"/>
</dbReference>
<dbReference type="InterPro" id="IPR036156">
    <property type="entry name" value="Beta-gal/glucu_dom_sf"/>
</dbReference>
<dbReference type="InterPro" id="IPR008979">
    <property type="entry name" value="Galactose-bd-like_sf"/>
</dbReference>
<dbReference type="InterPro" id="IPR006101">
    <property type="entry name" value="Glyco_hydro_2"/>
</dbReference>
<dbReference type="InterPro" id="IPR023232">
    <property type="entry name" value="Glyco_hydro_2_AS"/>
</dbReference>
<dbReference type="InterPro" id="IPR006103">
    <property type="entry name" value="Glyco_hydro_2_cat"/>
</dbReference>
<dbReference type="InterPro" id="IPR023230">
    <property type="entry name" value="Glyco_hydro_2_CS"/>
</dbReference>
<dbReference type="InterPro" id="IPR006102">
    <property type="entry name" value="Glyco_hydro_2_Ig-like"/>
</dbReference>
<dbReference type="InterPro" id="IPR006104">
    <property type="entry name" value="Glyco_hydro_2_N"/>
</dbReference>
<dbReference type="InterPro" id="IPR017853">
    <property type="entry name" value="Glycoside_hydrolase_SF"/>
</dbReference>
<dbReference type="InterPro" id="IPR013783">
    <property type="entry name" value="Ig-like_fold"/>
</dbReference>
<dbReference type="NCBIfam" id="NF007538">
    <property type="entry name" value="PRK10150.1"/>
    <property type="match status" value="1"/>
</dbReference>
<dbReference type="PANTHER" id="PTHR10066">
    <property type="entry name" value="BETA-GLUCURONIDASE"/>
    <property type="match status" value="1"/>
</dbReference>
<dbReference type="PANTHER" id="PTHR10066:SF67">
    <property type="entry name" value="BETA-GLUCURONIDASE"/>
    <property type="match status" value="1"/>
</dbReference>
<dbReference type="Pfam" id="PF00703">
    <property type="entry name" value="Glyco_hydro_2"/>
    <property type="match status" value="1"/>
</dbReference>
<dbReference type="Pfam" id="PF02836">
    <property type="entry name" value="Glyco_hydro_2_C"/>
    <property type="match status" value="1"/>
</dbReference>
<dbReference type="Pfam" id="PF02837">
    <property type="entry name" value="Glyco_hydro_2_N"/>
    <property type="match status" value="1"/>
</dbReference>
<dbReference type="PRINTS" id="PR00132">
    <property type="entry name" value="GLHYDRLASE2"/>
</dbReference>
<dbReference type="SUPFAM" id="SSF51445">
    <property type="entry name" value="(Trans)glycosidases"/>
    <property type="match status" value="1"/>
</dbReference>
<dbReference type="SUPFAM" id="SSF49303">
    <property type="entry name" value="beta-Galactosidase/glucuronidase domain"/>
    <property type="match status" value="1"/>
</dbReference>
<dbReference type="SUPFAM" id="SSF49785">
    <property type="entry name" value="Galactose-binding domain-like"/>
    <property type="match status" value="1"/>
</dbReference>
<dbReference type="PROSITE" id="PS00719">
    <property type="entry name" value="GLYCOSYL_HYDROL_F2_1"/>
    <property type="match status" value="1"/>
</dbReference>
<dbReference type="PROSITE" id="PS00608">
    <property type="entry name" value="GLYCOSYL_HYDROL_F2_2"/>
    <property type="match status" value="1"/>
</dbReference>
<reference key="1">
    <citation type="journal article" date="1987" name="Proc. Natl. Acad. Sci. U.S.A.">
        <title>Cloning, sequencing, and expression of cDNA for human beta-glucuronidase.</title>
        <authorList>
            <person name="Oshima A."/>
            <person name="Kyle J.W."/>
            <person name="Miller R.D."/>
            <person name="Hoffmann J.W."/>
            <person name="Powell P.P."/>
            <person name="Grubb J.H."/>
            <person name="Sly W.S."/>
            <person name="Tropak M."/>
            <person name="Guise K.S."/>
            <person name="Gravel R.A."/>
        </authorList>
    </citation>
    <scope>NUCLEOTIDE SEQUENCE [MRNA] (ISOFORM 1)</scope>
    <scope>VARIANT PRO-649</scope>
    <scope>ALTERNATIVE SPLICING</scope>
    <source>
        <tissue>Placenta</tissue>
    </source>
</reference>
<reference key="2">
    <citation type="journal article" date="2004" name="Nat. Genet.">
        <title>Complete sequencing and characterization of 21,243 full-length human cDNAs.</title>
        <authorList>
            <person name="Ota T."/>
            <person name="Suzuki Y."/>
            <person name="Nishikawa T."/>
            <person name="Otsuki T."/>
            <person name="Sugiyama T."/>
            <person name="Irie R."/>
            <person name="Wakamatsu A."/>
            <person name="Hayashi K."/>
            <person name="Sato H."/>
            <person name="Nagai K."/>
            <person name="Kimura K."/>
            <person name="Makita H."/>
            <person name="Sekine M."/>
            <person name="Obayashi M."/>
            <person name="Nishi T."/>
            <person name="Shibahara T."/>
            <person name="Tanaka T."/>
            <person name="Ishii S."/>
            <person name="Yamamoto J."/>
            <person name="Saito K."/>
            <person name="Kawai Y."/>
            <person name="Isono Y."/>
            <person name="Nakamura Y."/>
            <person name="Nagahari K."/>
            <person name="Murakami K."/>
            <person name="Yasuda T."/>
            <person name="Iwayanagi T."/>
            <person name="Wagatsuma M."/>
            <person name="Shiratori A."/>
            <person name="Sudo H."/>
            <person name="Hosoiri T."/>
            <person name="Kaku Y."/>
            <person name="Kodaira H."/>
            <person name="Kondo H."/>
            <person name="Sugawara M."/>
            <person name="Takahashi M."/>
            <person name="Kanda K."/>
            <person name="Yokoi T."/>
            <person name="Furuya T."/>
            <person name="Kikkawa E."/>
            <person name="Omura Y."/>
            <person name="Abe K."/>
            <person name="Kamihara K."/>
            <person name="Katsuta N."/>
            <person name="Sato K."/>
            <person name="Tanikawa M."/>
            <person name="Yamazaki M."/>
            <person name="Ninomiya K."/>
            <person name="Ishibashi T."/>
            <person name="Yamashita H."/>
            <person name="Murakawa K."/>
            <person name="Fujimori K."/>
            <person name="Tanai H."/>
            <person name="Kimata M."/>
            <person name="Watanabe M."/>
            <person name="Hiraoka S."/>
            <person name="Chiba Y."/>
            <person name="Ishida S."/>
            <person name="Ono Y."/>
            <person name="Takiguchi S."/>
            <person name="Watanabe S."/>
            <person name="Yosida M."/>
            <person name="Hotuta T."/>
            <person name="Kusano J."/>
            <person name="Kanehori K."/>
            <person name="Takahashi-Fujii A."/>
            <person name="Hara H."/>
            <person name="Tanase T.-O."/>
            <person name="Nomura Y."/>
            <person name="Togiya S."/>
            <person name="Komai F."/>
            <person name="Hara R."/>
            <person name="Takeuchi K."/>
            <person name="Arita M."/>
            <person name="Imose N."/>
            <person name="Musashino K."/>
            <person name="Yuuki H."/>
            <person name="Oshima A."/>
            <person name="Sasaki N."/>
            <person name="Aotsuka S."/>
            <person name="Yoshikawa Y."/>
            <person name="Matsunawa H."/>
            <person name="Ichihara T."/>
            <person name="Shiohata N."/>
            <person name="Sano S."/>
            <person name="Moriya S."/>
            <person name="Momiyama H."/>
            <person name="Satoh N."/>
            <person name="Takami S."/>
            <person name="Terashima Y."/>
            <person name="Suzuki O."/>
            <person name="Nakagawa S."/>
            <person name="Senoh A."/>
            <person name="Mizoguchi H."/>
            <person name="Goto Y."/>
            <person name="Shimizu F."/>
            <person name="Wakebe H."/>
            <person name="Hishigaki H."/>
            <person name="Watanabe T."/>
            <person name="Sugiyama A."/>
            <person name="Takemoto M."/>
            <person name="Kawakami B."/>
            <person name="Yamazaki M."/>
            <person name="Watanabe K."/>
            <person name="Kumagai A."/>
            <person name="Itakura S."/>
            <person name="Fukuzumi Y."/>
            <person name="Fujimori Y."/>
            <person name="Komiyama M."/>
            <person name="Tashiro H."/>
            <person name="Tanigami A."/>
            <person name="Fujiwara T."/>
            <person name="Ono T."/>
            <person name="Yamada K."/>
            <person name="Fujii Y."/>
            <person name="Ozaki K."/>
            <person name="Hirao M."/>
            <person name="Ohmori Y."/>
            <person name="Kawabata A."/>
            <person name="Hikiji T."/>
            <person name="Kobatake N."/>
            <person name="Inagaki H."/>
            <person name="Ikema Y."/>
            <person name="Okamoto S."/>
            <person name="Okitani R."/>
            <person name="Kawakami T."/>
            <person name="Noguchi S."/>
            <person name="Itoh T."/>
            <person name="Shigeta K."/>
            <person name="Senba T."/>
            <person name="Matsumura K."/>
            <person name="Nakajima Y."/>
            <person name="Mizuno T."/>
            <person name="Morinaga M."/>
            <person name="Sasaki M."/>
            <person name="Togashi T."/>
            <person name="Oyama M."/>
            <person name="Hata H."/>
            <person name="Watanabe M."/>
            <person name="Komatsu T."/>
            <person name="Mizushima-Sugano J."/>
            <person name="Satoh T."/>
            <person name="Shirai Y."/>
            <person name="Takahashi Y."/>
            <person name="Nakagawa K."/>
            <person name="Okumura K."/>
            <person name="Nagase T."/>
            <person name="Nomura N."/>
            <person name="Kikuchi H."/>
            <person name="Masuho Y."/>
            <person name="Yamashita R."/>
            <person name="Nakai K."/>
            <person name="Yada T."/>
            <person name="Nakamura Y."/>
            <person name="Ohara O."/>
            <person name="Isogai T."/>
            <person name="Sugano S."/>
        </authorList>
    </citation>
    <scope>NUCLEOTIDE SEQUENCE [LARGE SCALE MRNA] (ISOFORM 3)</scope>
    <scope>VARIANT PRO-649</scope>
    <source>
        <tissue>Lung</tissue>
    </source>
</reference>
<reference key="3">
    <citation type="submission" date="2005-04" db="EMBL/GenBank/DDBJ databases">
        <authorList>
            <person name="Totoki Y."/>
            <person name="Toyoda A."/>
            <person name="Takeda T."/>
            <person name="Sakaki Y."/>
            <person name="Tanaka A."/>
            <person name="Yokoyama S."/>
        </authorList>
    </citation>
    <scope>NUCLEOTIDE SEQUENCE [LARGE SCALE MRNA] (ISOFORM 1)</scope>
</reference>
<reference key="4">
    <citation type="journal article" date="2003" name="Nature">
        <title>The DNA sequence of human chromosome 7.</title>
        <authorList>
            <person name="Hillier L.W."/>
            <person name="Fulton R.S."/>
            <person name="Fulton L.A."/>
            <person name="Graves T.A."/>
            <person name="Pepin K.H."/>
            <person name="Wagner-McPherson C."/>
            <person name="Layman D."/>
            <person name="Maas J."/>
            <person name="Jaeger S."/>
            <person name="Walker R."/>
            <person name="Wylie K."/>
            <person name="Sekhon M."/>
            <person name="Becker M.C."/>
            <person name="O'Laughlin M.D."/>
            <person name="Schaller M.E."/>
            <person name="Fewell G.A."/>
            <person name="Delehaunty K.D."/>
            <person name="Miner T.L."/>
            <person name="Nash W.E."/>
            <person name="Cordes M."/>
            <person name="Du H."/>
            <person name="Sun H."/>
            <person name="Edwards J."/>
            <person name="Bradshaw-Cordum H."/>
            <person name="Ali J."/>
            <person name="Andrews S."/>
            <person name="Isak A."/>
            <person name="Vanbrunt A."/>
            <person name="Nguyen C."/>
            <person name="Du F."/>
            <person name="Lamar B."/>
            <person name="Courtney L."/>
            <person name="Kalicki J."/>
            <person name="Ozersky P."/>
            <person name="Bielicki L."/>
            <person name="Scott K."/>
            <person name="Holmes A."/>
            <person name="Harkins R."/>
            <person name="Harris A."/>
            <person name="Strong C.M."/>
            <person name="Hou S."/>
            <person name="Tomlinson C."/>
            <person name="Dauphin-Kohlberg S."/>
            <person name="Kozlowicz-Reilly A."/>
            <person name="Leonard S."/>
            <person name="Rohlfing T."/>
            <person name="Rock S.M."/>
            <person name="Tin-Wollam A.-M."/>
            <person name="Abbott A."/>
            <person name="Minx P."/>
            <person name="Maupin R."/>
            <person name="Strowmatt C."/>
            <person name="Latreille P."/>
            <person name="Miller N."/>
            <person name="Johnson D."/>
            <person name="Murray J."/>
            <person name="Woessner J.P."/>
            <person name="Wendl M.C."/>
            <person name="Yang S.-P."/>
            <person name="Schultz B.R."/>
            <person name="Wallis J.W."/>
            <person name="Spieth J."/>
            <person name="Bieri T.A."/>
            <person name="Nelson J.O."/>
            <person name="Berkowicz N."/>
            <person name="Wohldmann P.E."/>
            <person name="Cook L.L."/>
            <person name="Hickenbotham M.T."/>
            <person name="Eldred J."/>
            <person name="Williams D."/>
            <person name="Bedell J.A."/>
            <person name="Mardis E.R."/>
            <person name="Clifton S.W."/>
            <person name="Chissoe S.L."/>
            <person name="Marra M.A."/>
            <person name="Raymond C."/>
            <person name="Haugen E."/>
            <person name="Gillett W."/>
            <person name="Zhou Y."/>
            <person name="James R."/>
            <person name="Phelps K."/>
            <person name="Iadanoto S."/>
            <person name="Bubb K."/>
            <person name="Simms E."/>
            <person name="Levy R."/>
            <person name="Clendenning J."/>
            <person name="Kaul R."/>
            <person name="Kent W.J."/>
            <person name="Furey T.S."/>
            <person name="Baertsch R.A."/>
            <person name="Brent M.R."/>
            <person name="Keibler E."/>
            <person name="Flicek P."/>
            <person name="Bork P."/>
            <person name="Suyama M."/>
            <person name="Bailey J.A."/>
            <person name="Portnoy M.E."/>
            <person name="Torrents D."/>
            <person name="Chinwalla A.T."/>
            <person name="Gish W.R."/>
            <person name="Eddy S.R."/>
            <person name="McPherson J.D."/>
            <person name="Olson M.V."/>
            <person name="Eichler E.E."/>
            <person name="Green E.D."/>
            <person name="Waterston R.H."/>
            <person name="Wilson R.K."/>
        </authorList>
    </citation>
    <scope>NUCLEOTIDE SEQUENCE [LARGE SCALE GENOMIC DNA]</scope>
</reference>
<reference key="5">
    <citation type="journal article" date="2003" name="Science">
        <title>Human chromosome 7: DNA sequence and biology.</title>
        <authorList>
            <person name="Scherer S.W."/>
            <person name="Cheung J."/>
            <person name="MacDonald J.R."/>
            <person name="Osborne L.R."/>
            <person name="Nakabayashi K."/>
            <person name="Herbrick J.-A."/>
            <person name="Carson A.R."/>
            <person name="Parker-Katiraee L."/>
            <person name="Skaug J."/>
            <person name="Khaja R."/>
            <person name="Zhang J."/>
            <person name="Hudek A.K."/>
            <person name="Li M."/>
            <person name="Haddad M."/>
            <person name="Duggan G.E."/>
            <person name="Fernandez B.A."/>
            <person name="Kanematsu E."/>
            <person name="Gentles S."/>
            <person name="Christopoulos C.C."/>
            <person name="Choufani S."/>
            <person name="Kwasnicka D."/>
            <person name="Zheng X.H."/>
            <person name="Lai Z."/>
            <person name="Nusskern D.R."/>
            <person name="Zhang Q."/>
            <person name="Gu Z."/>
            <person name="Lu F."/>
            <person name="Zeesman S."/>
            <person name="Nowaczyk M.J."/>
            <person name="Teshima I."/>
            <person name="Chitayat D."/>
            <person name="Shuman C."/>
            <person name="Weksberg R."/>
            <person name="Zackai E.H."/>
            <person name="Grebe T.A."/>
            <person name="Cox S.R."/>
            <person name="Kirkpatrick S.J."/>
            <person name="Rahman N."/>
            <person name="Friedman J.M."/>
            <person name="Heng H.H.Q."/>
            <person name="Pelicci P.G."/>
            <person name="Lo-Coco F."/>
            <person name="Belloni E."/>
            <person name="Shaffer L.G."/>
            <person name="Pober B."/>
            <person name="Morton C.C."/>
            <person name="Gusella J.F."/>
            <person name="Bruns G.A.P."/>
            <person name="Korf B.R."/>
            <person name="Quade B.J."/>
            <person name="Ligon A.H."/>
            <person name="Ferguson H."/>
            <person name="Higgins A.W."/>
            <person name="Leach N.T."/>
            <person name="Herrick S.R."/>
            <person name="Lemyre E."/>
            <person name="Farra C.G."/>
            <person name="Kim H.-G."/>
            <person name="Summers A.M."/>
            <person name="Gripp K.W."/>
            <person name="Roberts W."/>
            <person name="Szatmari P."/>
            <person name="Winsor E.J.T."/>
            <person name="Grzeschik K.-H."/>
            <person name="Teebi A."/>
            <person name="Minassian B.A."/>
            <person name="Kere J."/>
            <person name="Armengol L."/>
            <person name="Pujana M.A."/>
            <person name="Estivill X."/>
            <person name="Wilson M.D."/>
            <person name="Koop B.F."/>
            <person name="Tosi S."/>
            <person name="Moore G.E."/>
            <person name="Boright A.P."/>
            <person name="Zlotorynski E."/>
            <person name="Kerem B."/>
            <person name="Kroisel P.M."/>
            <person name="Petek E."/>
            <person name="Oscier D.G."/>
            <person name="Mould S.J."/>
            <person name="Doehner H."/>
            <person name="Doehner K."/>
            <person name="Rommens J.M."/>
            <person name="Vincent J.B."/>
            <person name="Venter J.C."/>
            <person name="Li P.W."/>
            <person name="Mural R.J."/>
            <person name="Adams M.D."/>
            <person name="Tsui L.-C."/>
        </authorList>
    </citation>
    <scope>NUCLEOTIDE SEQUENCE [LARGE SCALE GENOMIC DNA]</scope>
</reference>
<reference key="6">
    <citation type="submission" date="2005-07" db="EMBL/GenBank/DDBJ databases">
        <authorList>
            <person name="Mural R.J."/>
            <person name="Istrail S."/>
            <person name="Sutton G.G."/>
            <person name="Florea L."/>
            <person name="Halpern A.L."/>
            <person name="Mobarry C.M."/>
            <person name="Lippert R."/>
            <person name="Walenz B."/>
            <person name="Shatkay H."/>
            <person name="Dew I."/>
            <person name="Miller J.R."/>
            <person name="Flanigan M.J."/>
            <person name="Edwards N.J."/>
            <person name="Bolanos R."/>
            <person name="Fasulo D."/>
            <person name="Halldorsson B.V."/>
            <person name="Hannenhalli S."/>
            <person name="Turner R."/>
            <person name="Yooseph S."/>
            <person name="Lu F."/>
            <person name="Nusskern D.R."/>
            <person name="Shue B.C."/>
            <person name="Zheng X.H."/>
            <person name="Zhong F."/>
            <person name="Delcher A.L."/>
            <person name="Huson D.H."/>
            <person name="Kravitz S.A."/>
            <person name="Mouchard L."/>
            <person name="Reinert K."/>
            <person name="Remington K.A."/>
            <person name="Clark A.G."/>
            <person name="Waterman M.S."/>
            <person name="Eichler E.E."/>
            <person name="Adams M.D."/>
            <person name="Hunkapiller M.W."/>
            <person name="Myers E.W."/>
            <person name="Venter J.C."/>
        </authorList>
    </citation>
    <scope>NUCLEOTIDE SEQUENCE [LARGE SCALE GENOMIC DNA]</scope>
</reference>
<reference key="7">
    <citation type="journal article" date="2004" name="Genome Res.">
        <title>The status, quality, and expansion of the NIH full-length cDNA project: the Mammalian Gene Collection (MGC).</title>
        <authorList>
            <consortium name="The MGC Project Team"/>
        </authorList>
    </citation>
    <scope>NUCLEOTIDE SEQUENCE [LARGE SCALE MRNA] (ISOFORM 1)</scope>
    <source>
        <tissue>Colon</tissue>
    </source>
</reference>
<reference key="8">
    <citation type="journal article" date="1991" name="Genomics">
        <title>Analysis of the 5' flanking region of the human beta-glucuronidase gene.</title>
        <authorList>
            <person name="Shipley J.M."/>
            <person name="Miller R.D."/>
            <person name="Wu B.M."/>
            <person name="Grubb J.H."/>
            <person name="Christensen S.G."/>
            <person name="Kyle J.W."/>
            <person name="Sly W.S."/>
        </authorList>
    </citation>
    <scope>NUCLEOTIDE SEQUENCE [GENOMIC DNA] OF 1-70</scope>
</reference>
<reference key="9">
    <citation type="journal article" date="1992" name="Biol. Chem. Hoppe-Seyler">
        <title>Characterization of the subunits and sugar moiety of human placental and leukemic beta-glucuronidase.</title>
        <authorList>
            <person name="Tanaka J."/>
            <person name="Gasa S."/>
            <person name="Sakurada K."/>
            <person name="Miyazaki T."/>
            <person name="Kasai M."/>
            <person name="Makita A."/>
        </authorList>
    </citation>
    <scope>PROTEIN SEQUENCE OF 23-32 AND 160-175</scope>
    <source>
        <tissue>Placenta</tissue>
    </source>
</reference>
<reference key="10">
    <citation type="journal article" date="1985" name="Gene">
        <title>Isolation and expression in Escherichia coli of a cDNA clone encoding human beta-glucuronidase.</title>
        <authorList>
            <person name="Guise K.S."/>
            <person name="Korneluk R.G."/>
            <person name="Waye J."/>
            <person name="Lamhonwah A.-M."/>
            <person name="Quan F."/>
            <person name="Palmer R."/>
            <person name="Ganschow R.E."/>
            <person name="Sly W.S."/>
            <person name="Gravel R.A."/>
        </authorList>
    </citation>
    <scope>NUCLEOTIDE SEQUENCE [MRNA] OF 520-585</scope>
    <source>
        <tissue>Fibroblast</tissue>
    </source>
</reference>
<reference key="11">
    <citation type="journal article" date="2001" name="Pediatr. Res.">
        <title>A novel inhibitor of beta-glucuronidase: L-aspartic acid.</title>
        <authorList>
            <person name="Kreamer B.L."/>
            <person name="Siegel F.L."/>
            <person name="Gourley G.R."/>
        </authorList>
    </citation>
    <scope>INHIBITION BY L-ASPARTIC ACID</scope>
</reference>
<reference key="12">
    <citation type="journal article" date="1988" name="Biochem. J.">
        <title>Rat liver beta-glucuronidase. cDNA cloning, sequence comparisons and expression of a chimeric protein in COS cells.</title>
        <authorList>
            <person name="Powell P.P."/>
            <person name="Kyle J.W."/>
            <person name="Miller R.D."/>
            <person name="Pantano J."/>
            <person name="Grubb J.H."/>
            <person name="Sly W.S."/>
        </authorList>
    </citation>
    <scope>CATALYTIC ACTIVITY</scope>
    <source>
        <tissue>Liver</tissue>
    </source>
</reference>
<reference key="13">
    <citation type="journal article" date="2003" name="Nat. Biotechnol.">
        <title>Identification and quantification of N-linked glycoproteins using hydrazide chemistry, stable isotope labeling and mass spectrometry.</title>
        <authorList>
            <person name="Zhang H."/>
            <person name="Li X.-J."/>
            <person name="Martin D.B."/>
            <person name="Aebersold R."/>
        </authorList>
    </citation>
    <scope>GLYCOSYLATION AT ASN-272</scope>
</reference>
<reference key="14">
    <citation type="journal article" date="2005" name="J. Proteome Res.">
        <title>Human plasma N-glycoproteome analysis by immunoaffinity subtraction, hydrazide chemistry, and mass spectrometry.</title>
        <authorList>
            <person name="Liu T."/>
            <person name="Qian W.-J."/>
            <person name="Gritsenko M.A."/>
            <person name="Camp D.G. II"/>
            <person name="Monroe M.E."/>
            <person name="Moore R.J."/>
            <person name="Smith R.D."/>
        </authorList>
    </citation>
    <scope>GLYCOSYLATION [LARGE SCALE ANALYSIS] AT ASN-272</scope>
    <source>
        <tissue>Plasma</tissue>
    </source>
</reference>
<reference key="15">
    <citation type="journal article" date="2009" name="J. Proteome Res.">
        <title>Glycoproteomics analysis of human liver tissue by combination of multiple enzyme digestion and hydrazide chemistry.</title>
        <authorList>
            <person name="Chen R."/>
            <person name="Jiang X."/>
            <person name="Sun D."/>
            <person name="Han G."/>
            <person name="Wang F."/>
            <person name="Ye M."/>
            <person name="Wang L."/>
            <person name="Zou H."/>
        </authorList>
    </citation>
    <scope>GLYCOSYLATION [LARGE SCALE ANALYSIS] AT ASN-173; ASN-272 AND ASN-631</scope>
    <source>
        <tissue>Liver</tissue>
    </source>
</reference>
<reference key="16">
    <citation type="journal article" date="2014" name="J. Proteomics">
        <title>An enzyme assisted RP-RPLC approach for in-depth analysis of human liver phosphoproteome.</title>
        <authorList>
            <person name="Bian Y."/>
            <person name="Song C."/>
            <person name="Cheng K."/>
            <person name="Dong M."/>
            <person name="Wang F."/>
            <person name="Huang J."/>
            <person name="Sun D."/>
            <person name="Wang L."/>
            <person name="Ye M."/>
            <person name="Zou H."/>
        </authorList>
    </citation>
    <scope>IDENTIFICATION BY MASS SPECTROMETRY [LARGE SCALE ANALYSIS]</scope>
    <source>
        <tissue>Liver</tissue>
    </source>
</reference>
<reference key="17">
    <citation type="journal article" date="2015" name="Proteomics">
        <title>N-terminome analysis of the human mitochondrial proteome.</title>
        <authorList>
            <person name="Vaca Jacome A.S."/>
            <person name="Rabilloud T."/>
            <person name="Schaeffer-Reiss C."/>
            <person name="Rompais M."/>
            <person name="Ayoub D."/>
            <person name="Lane L."/>
            <person name="Bairoch A."/>
            <person name="Van Dorsselaer A."/>
            <person name="Carapito C."/>
        </authorList>
    </citation>
    <scope>IDENTIFICATION BY MASS SPECTROMETRY [LARGE SCALE ANALYSIS]</scope>
</reference>
<reference key="18">
    <citation type="journal article" date="1996" name="Nat. Struct. Biol.">
        <title>Structure of human beta-glucuronidase reveals candidate lysosomal targeting and active-site motifs.</title>
        <authorList>
            <person name="Jain S."/>
            <person name="Drendel W.B."/>
            <person name="Chen Z.W."/>
            <person name="Mathews F.S."/>
            <person name="Sly W.S."/>
            <person name="Grubb J.H."/>
        </authorList>
    </citation>
    <scope>X-RAY CRYSTALLOGRAPHY (2.6 ANGSTROMS)</scope>
</reference>
<reference key="19">
    <citation type="journal article" date="1993" name="Hum. Mutat.">
        <title>Molecular analysis of a patient with hydrops fetalis caused by beta-glucuronidase deficiency, and evidence for additional pseudogenes.</title>
        <authorList>
            <person name="Vervoort R."/>
            <person name="Lissens W."/>
            <person name="Liebaers I."/>
        </authorList>
    </citation>
    <scope>VARIANT MPS7 TRP-216</scope>
</reference>
<reference key="20">
    <citation type="journal article" date="1993" name="Hum. Mutat.">
        <title>Mutational studies in a patient with the hydrops fetalis form of mucopolysaccharidosis type VII.</title>
        <authorList>
            <person name="Wu B.M."/>
            <person name="Sly W.S."/>
        </authorList>
    </citation>
    <scope>VARIANTS MPS7 VAL-354 AND TRP-611</scope>
</reference>
<reference key="21">
    <citation type="journal article" date="1991" name="Am. J. Hum. Genet.">
        <title>Mucopolysaccharidosis type VII: characterization of mutations and molecular heterogeneity.</title>
        <authorList>
            <person name="Tomatsu S."/>
            <person name="Fukuda S."/>
            <person name="Sukegawa K."/>
            <person name="Ikedo Y."/>
            <person name="Yamada S."/>
            <person name="Yamada Y."/>
            <person name="Sasaki T."/>
            <person name="Okamoto H."/>
            <person name="Kuwahara T."/>
            <person name="Yamaguchi S."/>
            <person name="Kiman T."/>
            <person name="Shintaku H."/>
            <person name="Isshiki G."/>
            <person name="Orii T."/>
        </authorList>
    </citation>
    <scope>VARIANTS MPS7 CYS-382 AND VAL-619</scope>
</reference>
<reference key="22">
    <citation type="journal article" date="1993" name="Am. J. Hum. Genet.">
        <title>Mutational analysis of a patient with mucopolysaccharidosis type VII, and identification of pseudogenes.</title>
        <authorList>
            <person name="Shipley J.M."/>
            <person name="Klinkenberg M."/>
            <person name="Wu B.M."/>
            <person name="Bachinsky D.R."/>
            <person name="Grubb J.H."/>
            <person name="Sly W.S."/>
        </authorList>
    </citation>
    <scope>VARIANT MPS7 CYS-627</scope>
</reference>
<reference key="23">
    <citation type="journal article" date="1994" name="J. Biol. Chem.">
        <title>Overexpression rescues the mutant phenotype of L176F mutation causing beta-glucuronidase deficiency mucopolysaccharidosis in two Mennonite siblings.</title>
        <authorList>
            <person name="Wu B.M."/>
            <person name="Tomatsu S."/>
            <person name="Fukuda S."/>
            <person name="Sukegawa K."/>
            <person name="Orii T."/>
            <person name="Sly W.S."/>
        </authorList>
    </citation>
    <scope>VARIANT MPS7 PHE-176</scope>
    <scope>VARIANT PRO-649</scope>
</reference>
<reference key="24">
    <citation type="journal article" date="1995" name="Am. J. Hum. Genet.">
        <title>A pseudodeficiency allele (D152N) of the human beta-glucuronidase gene.</title>
        <authorList>
            <person name="Vervoort R."/>
            <person name="Islam M.R."/>
            <person name="Sly W."/>
            <person name="Chabas A."/>
            <person name="Wevers R."/>
            <person name="de Jong J."/>
            <person name="Liebaers I."/>
            <person name="Lissens W."/>
        </authorList>
    </citation>
    <scope>VARIANT MPS7 PHE-176</scope>
    <scope>VARIANT ASN-152</scope>
    <scope>CHARACTERIZATION OF VARIANT ASN-152</scope>
</reference>
<reference key="25">
    <citation type="journal article" date="1995" name="Hum. Mol. Genet.">
        <title>Four novel mutations in mucopolysaccharidosis type VII including a unique base substitution in exon 10 of the beta-glucuronidase gene that creates a novel 5'-splice site.</title>
        <authorList>
            <person name="Yamada S."/>
            <person name="Tomatsu S."/>
            <person name="Sly W.S."/>
            <person name="Islam R."/>
            <person name="Wenger D.A."/>
            <person name="Fukuda S."/>
            <person name="Sukegawa K."/>
            <person name="Orii T."/>
        </authorList>
    </citation>
    <scope>VARIANTS MPS7 SER-148 AND CYS-495</scope>
</reference>
<reference key="26">
    <citation type="journal article" date="1996" name="Am. J. Hum. Genet.">
        <title>Molecular analysis of patients with beta-glucuronidase deficiency presenting as hydrops fetalis or as early mucopolysaccharidosis VII.</title>
        <authorList>
            <person name="Vervoort R."/>
            <person name="Islam M.R."/>
            <person name="Sly W.S."/>
            <person name="Zabot M.T."/>
            <person name="Kleijer W.J."/>
            <person name="Chabas A."/>
            <person name="Fensom A."/>
            <person name="Young E.P."/>
            <person name="Liebaers I."/>
            <person name="Lissens W."/>
        </authorList>
    </citation>
    <scope>VARIANTS MPS7 ARG-136; LYS-150; PHE-176; TRP-216; CYS-320; SER-320; TYR-351; CYS-374; CYS-382; HIS-382; PRO-435; TRP-477; CYS-508; ASP-572; ASN-606 AND CYS-627</scope>
</reference>
<reference key="27">
    <citation type="journal article" date="1996" name="Hum. Genet.">
        <title>beta-Glucuronidase P408S, P415L mutations: evidence that both mutations combine to produce an MPS VII allele in certain Mexican patients.</title>
        <authorList>
            <person name="Islam M.R."/>
            <person name="Vervoort R."/>
            <person name="Lissens W."/>
            <person name="Hoo J.J."/>
            <person name="Valentino L.A."/>
            <person name="Sly W.S."/>
        </authorList>
    </citation>
    <scope>VARIANTS MPS7 SER-408 AND LEU-415</scope>
</reference>
<reference key="28">
    <citation type="journal article" date="1997" name="Hum. Genet.">
        <title>Molecular analysis of the beta-glucuronidase gene: novel mutations in mucopolysaccharidosis type VII and heterogeneity of the polyadenylation region.</title>
        <authorList>
            <person name="Vervoort R."/>
            <person name="Buist N.R."/>
            <person name="Kleijer W.J."/>
            <person name="Wevers R."/>
            <person name="Fryns J.P."/>
            <person name="Liebaers I."/>
            <person name="Lissens W."/>
        </authorList>
    </citation>
    <scope>VARIANT MPS7 PHE-52</scope>
    <scope>CHARACTERIZATION OF VARIANT MPS7 PHE-52</scope>
</reference>
<reference key="29">
    <citation type="journal article" date="1998" name="Hum. Genet.">
        <title>Low beta-glucuronidase enzyme activity and mutations in the human beta-glucuronidase gene in mild mucopolysaccharidosis type VII, pseudodeficiency and a heterozygote.</title>
        <authorList>
            <person name="Vervoort R."/>
            <person name="Gitzelmann R."/>
            <person name="Bosshard N."/>
            <person name="Maire I."/>
            <person name="Liebaers I."/>
            <person name="Lissens W."/>
        </authorList>
    </citation>
    <scope>VARIANT ASN-152</scope>
    <scope>VARIANTS MPS7 GLY-38 AND HIS-626</scope>
</reference>
<reference key="30">
    <citation type="journal article" date="2003" name="Clin. Genet.">
        <title>Mucopolysaccharidosis VII: clinical, biochemical and molecular investigation of a Brazilian family.</title>
        <authorList>
            <person name="Schwartz I."/>
            <person name="Silva L.R."/>
            <person name="Leistner S."/>
            <person name="Todeschini L.A."/>
            <person name="Burin M.G."/>
            <person name="Pina-Neto J.M."/>
            <person name="Islam R.M."/>
            <person name="Shah G.N."/>
            <person name="Sly W.S."/>
            <person name="Giugliani R."/>
        </authorList>
    </citation>
    <scope>VARIANT MPS7 PHE-176</scope>
</reference>
<reference key="31">
    <citation type="journal article" date="2003" name="Hum. Genet.">
        <title>Mutational analysis in longest known survivor of mucopolysaccharidosis type VII.</title>
        <authorList>
            <person name="Storch S."/>
            <person name="Wittenstein B."/>
            <person name="Islam R."/>
            <person name="Ullrich K."/>
            <person name="Sly W.S."/>
            <person name="Braulke T."/>
        </authorList>
    </citation>
    <scope>VARIANTS MPS7 ASN-350 AND LEU-577</scope>
    <scope>CHARACTERIZATION OF VARIANT MPS7 ASN-350 LEU-577</scope>
</reference>
<reference key="32">
    <citation type="journal article" date="2009" name="Hum. Mutat.">
        <title>Mutations and polymorphisms in GUSB gene in mucopolysaccharidosis VII (Sly Syndrome).</title>
        <authorList>
            <person name="Tomatsu S."/>
            <person name="Montano A.M."/>
            <person name="Dung V.C."/>
            <person name="Grubb J.H."/>
            <person name="Sly W.S."/>
        </authorList>
    </citation>
    <scope>VARIANTS MPS7 SER-30; GLY-152; PRO-243; SER-339; 361-PHE--ASP-369 DEL; ASN-362; LEU-364; LYS-540 AND ALA-607</scope>
</reference>
<proteinExistence type="evidence at protein level"/>
<sequence length="651" mass="74732">MARGSAVAWAALGPLLWGCALGLQGGMLYPQESPSRECKELDGLWSFRADFSDNRRRGFEEQWYRRPLWESGPTVDMPVPSSFNDISQDWRLRHFVGWVWYEREVILPERWTQDLRTRVVLRIGSAHSYAIVWVNGVDTLEHEGGYLPFEADISNLVQVGPLPSRLRITIAINNTLTPTTLPPGTIQYLTDTSKYPKGYFVQNTYFDFFNYAGLQRSVLLYTTPTTYIDDITVTTSVEQDSGLVNYQISVKGSNLFKLEVRLLDAENKVVANGTGTQGQLKVPGVSLWWPYLMHERPAYLYSLEVQLTAQTSLGPVSDFYTLPVGIRTVAVTKSQFLINGKPFYFHGVNKHEDADIRGKGFDWPLLVKDFNLLRWLGANAFRTSHYPYAEEVMQMCDRYGIVVIDECPGVGLALPQFFNNVSLHHHMQVMEEVVRRDKNHPAVVMWSVANEPASHLESAGYYLKMVIAHTKSLDPSRPVTFVSNSNYAADKGAPYVDVICLNSYYSWYHDYGHLELIQLQLATQFENWYKKYQKPIIQSEYGAETIAGFHQDPPLMFTEEYQKSLLEQYHLGLDQKRRKYVVGELIWNFADFMTEQSPTRVLGNKKGIFTRQRQPKSAAFLLRERYWKIANETRYPHSVAKSQCLENSLFT</sequence>
<accession>P08236</accession>
<accession>B4E1F6</accession>
<accession>E9PCV0</accession>
<accession>Q549U0</accession>
<accession>Q96CL9</accession>
<gene>
    <name type="primary">GUSB</name>
</gene>